<name>APOA1_PHOVI</name>
<reference key="1">
    <citation type="submission" date="2018-12" db="EMBL/GenBank/DDBJ databases">
        <authorList>
            <person name="Culibrk L."/>
            <person name="Leelakumari S."/>
            <person name="Taylor G.A."/>
            <person name="Tse K."/>
            <person name="Cheng D."/>
            <person name="Chuah E."/>
            <person name="Kirk H."/>
            <person name="Pandoh P."/>
            <person name="Troussard A."/>
            <person name="Zhao Y."/>
            <person name="Mungall A."/>
            <person name="Moore R."/>
            <person name="Akhurst L."/>
            <person name="Marra M.A."/>
            <person name="Haulena M."/>
            <person name="Jones S.J.M."/>
        </authorList>
    </citation>
    <scope>NUCLEOTIDE SEQUENCE [LARGE SCALE GENOMIC DNA]</scope>
</reference>
<reference key="2">
    <citation type="unpublished observations" date="2019-09">
        <authorList>
            <person name="Puppione D.L."/>
        </authorList>
    </citation>
    <scope>IDENTIFICATION</scope>
</reference>
<sequence>MKAVVLTLAVLFLTGSQARHFWQQDEPQSPWDRVKDLATVYVDVVKDGGRDYVAQFEASALGKQLNLKLLDNWDSLSSTVAKLREQIGPVTQEFWDNLEKETEVLRQEMNKDLEEVKKKVQPYLDEFQSKWHEEVELYRQKVAPLGAELREGARQKLQELQEKLSPLGEELRDRARTHVDALRAQLAPYSEQLRERLAARLQALKEGGGATLTEYHAKASEHLSALREKAKPALEDLRQGLMPVLESFRASLLAAVDEATKKLNAQ</sequence>
<keyword id="KW-0153">Cholesterol metabolism</keyword>
<keyword id="KW-0325">Glycoprotein</keyword>
<keyword id="KW-0345">HDL</keyword>
<keyword id="KW-0443">Lipid metabolism</keyword>
<keyword id="KW-0445">Lipid transport</keyword>
<keyword id="KW-0449">Lipoprotein</keyword>
<keyword id="KW-0558">Oxidation</keyword>
<keyword id="KW-0564">Palmitate</keyword>
<keyword id="KW-0597">Phosphoprotein</keyword>
<keyword id="KW-0677">Repeat</keyword>
<keyword id="KW-0964">Secreted</keyword>
<keyword id="KW-0732">Signal</keyword>
<keyword id="KW-0753">Steroid metabolism</keyword>
<keyword id="KW-1207">Sterol metabolism</keyword>
<keyword id="KW-0813">Transport</keyword>
<gene>
    <name type="primary">APOA1</name>
</gene>
<evidence type="ECO:0000250" key="1"/>
<evidence type="ECO:0000250" key="2">
    <source>
        <dbReference type="UniProtKB" id="G5BQH5"/>
    </source>
</evidence>
<evidence type="ECO:0000250" key="3">
    <source>
        <dbReference type="UniProtKB" id="P02647"/>
    </source>
</evidence>
<evidence type="ECO:0000250" key="4">
    <source>
        <dbReference type="UniProtKB" id="P02648"/>
    </source>
</evidence>
<evidence type="ECO:0000250" key="5">
    <source>
        <dbReference type="UniProtKB" id="P04639"/>
    </source>
</evidence>
<evidence type="ECO:0000255" key="6"/>
<evidence type="ECO:0000305" key="7"/>
<comment type="function">
    <text evidence="3">Participates in the reverse transport of cholesterol from tissues to the liver for excretion by promoting cholesterol efflux from tissues and by acting as a cofactor for the lecithin cholesterol acyltransferase (LCAT). As part of the SPAP complex, activates spermatozoa motility (By similarity).</text>
</comment>
<comment type="subunit">
    <text evidence="2 3 5">Homodimer (By similarity). Interacts with APOA1BP and CLU. Component of a sperm activating protein complex (SPAP), consisting of APOA1, an immunoglobulin heavy chain, an immunoglobulin light chain and albumin. Interacts with NDRG1. Interacts with SCGB3A2 (By similarity). Interacts with NAXE and YJEFN3 (By similarity).</text>
</comment>
<comment type="subcellular location">
    <subcellularLocation>
        <location evidence="3">Secreted</location>
    </subcellularLocation>
</comment>
<comment type="PTM">
    <text evidence="4">Glycosylated.</text>
</comment>
<comment type="PTM">
    <text evidence="4">Palmitoylated.</text>
</comment>
<comment type="PTM">
    <text evidence="1">Phosphorylation sites are present in the extracellular medium.</text>
</comment>
<comment type="similarity">
    <text evidence="7">Belongs to the apolipoprotein A1/A4/E family.</text>
</comment>
<protein>
    <recommendedName>
        <fullName>Apolipoprotein A-I</fullName>
        <shortName>Apo-AI</shortName>
        <shortName>ApoA-I</shortName>
    </recommendedName>
    <alternativeName>
        <fullName>Apolipoprotein A1</fullName>
    </alternativeName>
    <component>
        <recommendedName>
            <fullName>Proapolipoprotein A-I</fullName>
            <shortName>ProapoA-I</shortName>
        </recommendedName>
    </component>
    <component>
        <recommendedName>
            <fullName>Truncated apolipoprotein A-I</fullName>
        </recommendedName>
    </component>
</protein>
<feature type="signal peptide" evidence="6">
    <location>
        <begin position="1"/>
        <end position="18"/>
    </location>
</feature>
<feature type="chain" id="PRO_0000448513" description="Proapolipoprotein A-I">
    <location>
        <begin position="19"/>
        <end position="266"/>
    </location>
</feature>
<feature type="chain" id="PRO_0000448514" description="Apolipoprotein A-I">
    <location>
        <begin position="25"/>
        <end position="266"/>
    </location>
</feature>
<feature type="chain" id="PRO_0000448515" description="Truncated apolipoprotein A-I" evidence="3">
    <location>
        <begin position="25"/>
        <end position="265"/>
    </location>
</feature>
<feature type="repeat" description="1">
    <location>
        <begin position="67"/>
        <end position="88"/>
    </location>
</feature>
<feature type="repeat" description="2">
    <location>
        <begin position="89"/>
        <end position="110"/>
    </location>
</feature>
<feature type="repeat" description="3; half-length">
    <location>
        <begin position="111"/>
        <end position="121"/>
    </location>
</feature>
<feature type="repeat" description="4">
    <location>
        <begin position="122"/>
        <end position="143"/>
    </location>
</feature>
<feature type="repeat" description="5">
    <location>
        <begin position="144"/>
        <end position="165"/>
    </location>
</feature>
<feature type="repeat" description="6">
    <location>
        <begin position="166"/>
        <end position="187"/>
    </location>
</feature>
<feature type="repeat" description="7">
    <location>
        <begin position="188"/>
        <end position="209"/>
    </location>
</feature>
<feature type="repeat" description="8">
    <location>
        <begin position="210"/>
        <end position="231"/>
    </location>
</feature>
<feature type="repeat" description="9; half-length">
    <location>
        <begin position="232"/>
        <end position="242"/>
    </location>
</feature>
<feature type="repeat" description="10">
    <location>
        <begin position="243"/>
        <end position="266"/>
    </location>
</feature>
<feature type="region of interest" description="10 X approximate tandem repeats">
    <location>
        <begin position="67"/>
        <end position="266"/>
    </location>
</feature>
<feature type="modified residue" description="Methionine sulfoxide" evidence="3">
    <location>
        <position position="109"/>
    </location>
</feature>
<organism>
    <name type="scientific">Phoca vitulina</name>
    <name type="common">Harbor seal</name>
    <dbReference type="NCBI Taxonomy" id="9720"/>
    <lineage>
        <taxon>Eukaryota</taxon>
        <taxon>Metazoa</taxon>
        <taxon>Chordata</taxon>
        <taxon>Craniata</taxon>
        <taxon>Vertebrata</taxon>
        <taxon>Euteleostomi</taxon>
        <taxon>Mammalia</taxon>
        <taxon>Eutheria</taxon>
        <taxon>Laurasiatheria</taxon>
        <taxon>Carnivora</taxon>
        <taxon>Caniformia</taxon>
        <taxon>Pinnipedia</taxon>
        <taxon>Phocidae</taxon>
        <taxon>Phocinae</taxon>
        <taxon>Phoca</taxon>
    </lineage>
</organism>
<accession>P0DTR0</accession>
<proteinExistence type="inferred from homology"/>
<dbReference type="EMBL" id="RXNX01000000">
    <property type="status" value="NOT_ANNOTATED_CDS"/>
    <property type="molecule type" value="Genomic_DNA"/>
</dbReference>
<dbReference type="RefSeq" id="XP_032283611.1">
    <property type="nucleotide sequence ID" value="XM_032427720.1"/>
</dbReference>
<dbReference type="RefSeq" id="XP_032283612.1">
    <property type="nucleotide sequence ID" value="XM_032427721.1"/>
</dbReference>
<dbReference type="SMR" id="P0DTR0"/>
<dbReference type="GeneID" id="116646806"/>
<dbReference type="Proteomes" id="UP000793478">
    <property type="component" value="Unassembled WGS sequence"/>
</dbReference>
<dbReference type="GO" id="GO:0042627">
    <property type="term" value="C:chylomicron"/>
    <property type="evidence" value="ECO:0007669"/>
    <property type="project" value="TreeGrafter"/>
</dbReference>
<dbReference type="GO" id="GO:1903561">
    <property type="term" value="C:extracellular vesicle"/>
    <property type="evidence" value="ECO:0007669"/>
    <property type="project" value="TreeGrafter"/>
</dbReference>
<dbReference type="GO" id="GO:0034364">
    <property type="term" value="C:high-density lipoprotein particle"/>
    <property type="evidence" value="ECO:0007669"/>
    <property type="project" value="UniProtKB-KW"/>
</dbReference>
<dbReference type="GO" id="GO:0034362">
    <property type="term" value="C:low-density lipoprotein particle"/>
    <property type="evidence" value="ECO:0007669"/>
    <property type="project" value="TreeGrafter"/>
</dbReference>
<dbReference type="GO" id="GO:0034361">
    <property type="term" value="C:very-low-density lipoprotein particle"/>
    <property type="evidence" value="ECO:0007669"/>
    <property type="project" value="TreeGrafter"/>
</dbReference>
<dbReference type="GO" id="GO:0120020">
    <property type="term" value="F:cholesterol transfer activity"/>
    <property type="evidence" value="ECO:0007669"/>
    <property type="project" value="TreeGrafter"/>
</dbReference>
<dbReference type="GO" id="GO:0060228">
    <property type="term" value="F:phosphatidylcholine-sterol O-acyltransferase activator activity"/>
    <property type="evidence" value="ECO:0007669"/>
    <property type="project" value="TreeGrafter"/>
</dbReference>
<dbReference type="GO" id="GO:0005543">
    <property type="term" value="F:phospholipid binding"/>
    <property type="evidence" value="ECO:0007669"/>
    <property type="project" value="TreeGrafter"/>
</dbReference>
<dbReference type="GO" id="GO:0042803">
    <property type="term" value="F:protein homodimerization activity"/>
    <property type="evidence" value="ECO:0000250"/>
    <property type="project" value="UniProtKB"/>
</dbReference>
<dbReference type="GO" id="GO:0055090">
    <property type="term" value="P:acylglycerol homeostasis"/>
    <property type="evidence" value="ECO:0007669"/>
    <property type="project" value="TreeGrafter"/>
</dbReference>
<dbReference type="GO" id="GO:0033344">
    <property type="term" value="P:cholesterol efflux"/>
    <property type="evidence" value="ECO:0007669"/>
    <property type="project" value="TreeGrafter"/>
</dbReference>
<dbReference type="GO" id="GO:0008203">
    <property type="term" value="P:cholesterol metabolic process"/>
    <property type="evidence" value="ECO:0007669"/>
    <property type="project" value="UniProtKB-KW"/>
</dbReference>
<dbReference type="GO" id="GO:0042157">
    <property type="term" value="P:lipoprotein metabolic process"/>
    <property type="evidence" value="ECO:0007669"/>
    <property type="project" value="InterPro"/>
</dbReference>
<dbReference type="GO" id="GO:0033700">
    <property type="term" value="P:phospholipid efflux"/>
    <property type="evidence" value="ECO:0007669"/>
    <property type="project" value="TreeGrafter"/>
</dbReference>
<dbReference type="FunFam" id="1.20.120.20:FF:000001">
    <property type="entry name" value="Apolipoprotein A-I"/>
    <property type="match status" value="1"/>
</dbReference>
<dbReference type="FunFam" id="1.20.5.20:FF:000001">
    <property type="entry name" value="apolipoprotein A-I"/>
    <property type="match status" value="1"/>
</dbReference>
<dbReference type="Gene3D" id="1.20.5.20">
    <property type="match status" value="1"/>
</dbReference>
<dbReference type="Gene3D" id="6.10.140.380">
    <property type="match status" value="1"/>
</dbReference>
<dbReference type="Gene3D" id="1.20.120.20">
    <property type="entry name" value="Apolipoprotein"/>
    <property type="match status" value="1"/>
</dbReference>
<dbReference type="InterPro" id="IPR000074">
    <property type="entry name" value="ApoA_E"/>
</dbReference>
<dbReference type="InterPro" id="IPR050163">
    <property type="entry name" value="Apolipoprotein_A1/A4/E"/>
</dbReference>
<dbReference type="PANTHER" id="PTHR18976">
    <property type="entry name" value="APOLIPOPROTEIN"/>
    <property type="match status" value="1"/>
</dbReference>
<dbReference type="PANTHER" id="PTHR18976:SF11">
    <property type="entry name" value="APOLIPOPROTEIN A-I"/>
    <property type="match status" value="1"/>
</dbReference>
<dbReference type="Pfam" id="PF01442">
    <property type="entry name" value="Apolipoprotein"/>
    <property type="match status" value="1"/>
</dbReference>
<dbReference type="SUPFAM" id="SSF58113">
    <property type="entry name" value="Apolipoprotein A-I"/>
    <property type="match status" value="1"/>
</dbReference>